<evidence type="ECO:0000255" key="1"/>
<evidence type="ECO:0000255" key="2">
    <source>
        <dbReference type="PROSITE-ProRule" id="PRU00521"/>
    </source>
</evidence>
<evidence type="ECO:0000256" key="3">
    <source>
        <dbReference type="SAM" id="MobiDB-lite"/>
    </source>
</evidence>
<evidence type="ECO:0000305" key="4"/>
<dbReference type="EMBL" id="AF233341">
    <property type="protein sequence ID" value="AAF62517.1"/>
    <property type="molecule type" value="mRNA"/>
</dbReference>
<dbReference type="EMBL" id="AK031898">
    <property type="protein sequence ID" value="BAC27596.1"/>
    <property type="molecule type" value="mRNA"/>
</dbReference>
<dbReference type="EMBL" id="AK046424">
    <property type="protein sequence ID" value="BAC32723.1"/>
    <property type="molecule type" value="mRNA"/>
</dbReference>
<dbReference type="EMBL" id="X87823">
    <property type="protein sequence ID" value="CAA61088.1"/>
    <property type="molecule type" value="mRNA"/>
</dbReference>
<dbReference type="EMBL" id="L27827">
    <property type="protein sequence ID" value="AAA17893.1"/>
    <property type="molecule type" value="mRNA"/>
</dbReference>
<dbReference type="CCDS" id="CCDS17852.1"/>
<dbReference type="PIR" id="S55524">
    <property type="entry name" value="S55524"/>
</dbReference>
<dbReference type="RefSeq" id="NP_067357.1">
    <property type="nucleotide sequence ID" value="NM_021382.6"/>
</dbReference>
<dbReference type="SMR" id="P47937"/>
<dbReference type="FunCoup" id="P47937">
    <property type="interactions" value="758"/>
</dbReference>
<dbReference type="STRING" id="10090.ENSMUSP00000029822"/>
<dbReference type="BindingDB" id="P47937"/>
<dbReference type="GuidetoPHARMACOLOGY" id="362"/>
<dbReference type="GlyCosmos" id="P47937">
    <property type="glycosylation" value="4 sites, No reported glycans"/>
</dbReference>
<dbReference type="GlyGen" id="P47937">
    <property type="glycosylation" value="4 sites"/>
</dbReference>
<dbReference type="iPTMnet" id="P47937"/>
<dbReference type="PhosphoSitePlus" id="P47937"/>
<dbReference type="PaxDb" id="10090-ENSMUSP00000029822"/>
<dbReference type="ProteomicsDB" id="253076"/>
<dbReference type="Antibodypedia" id="1543">
    <property type="antibodies" value="356 antibodies from 34 providers"/>
</dbReference>
<dbReference type="Ensembl" id="ENSMUST00000029822.6">
    <property type="protein sequence ID" value="ENSMUSP00000029822.5"/>
    <property type="gene ID" value="ENSMUSG00000028172.6"/>
</dbReference>
<dbReference type="GeneID" id="21338"/>
<dbReference type="KEGG" id="mmu:21338"/>
<dbReference type="UCSC" id="uc008rky.2">
    <property type="organism name" value="mouse"/>
</dbReference>
<dbReference type="AGR" id="MGI:892968"/>
<dbReference type="CTD" id="6870"/>
<dbReference type="MGI" id="MGI:892968">
    <property type="gene designation" value="Tacr3"/>
</dbReference>
<dbReference type="VEuPathDB" id="HostDB:ENSMUSG00000028172"/>
<dbReference type="eggNOG" id="KOG4219">
    <property type="taxonomic scope" value="Eukaryota"/>
</dbReference>
<dbReference type="GeneTree" id="ENSGT00940000153745"/>
<dbReference type="HOGENOM" id="CLU_009579_6_1_1"/>
<dbReference type="InParanoid" id="P47937"/>
<dbReference type="OMA" id="PQCLYSI"/>
<dbReference type="OrthoDB" id="5981855at2759"/>
<dbReference type="PhylomeDB" id="P47937"/>
<dbReference type="TreeFam" id="TF315303"/>
<dbReference type="Reactome" id="R-MMU-380095">
    <property type="pathway name" value="Tachykinin receptors bind tachykinins"/>
</dbReference>
<dbReference type="Reactome" id="R-MMU-416476">
    <property type="pathway name" value="G alpha (q) signalling events"/>
</dbReference>
<dbReference type="BioGRID-ORCS" id="21338">
    <property type="hits" value="1 hit in 78 CRISPR screens"/>
</dbReference>
<dbReference type="ChiTaRS" id="Tacr3">
    <property type="organism name" value="mouse"/>
</dbReference>
<dbReference type="PRO" id="PR:P47937"/>
<dbReference type="Proteomes" id="UP000000589">
    <property type="component" value="Chromosome 3"/>
</dbReference>
<dbReference type="RNAct" id="P47937">
    <property type="molecule type" value="protein"/>
</dbReference>
<dbReference type="Bgee" id="ENSMUSG00000028172">
    <property type="expression patterns" value="Expressed in iris and 146 other cell types or tissues"/>
</dbReference>
<dbReference type="GO" id="GO:0032590">
    <property type="term" value="C:dendrite membrane"/>
    <property type="evidence" value="ECO:0007669"/>
    <property type="project" value="Ensembl"/>
</dbReference>
<dbReference type="GO" id="GO:0032809">
    <property type="term" value="C:neuronal cell body membrane"/>
    <property type="evidence" value="ECO:0007669"/>
    <property type="project" value="Ensembl"/>
</dbReference>
<dbReference type="GO" id="GO:0097225">
    <property type="term" value="C:sperm midpiece"/>
    <property type="evidence" value="ECO:0007669"/>
    <property type="project" value="Ensembl"/>
</dbReference>
<dbReference type="GO" id="GO:0004995">
    <property type="term" value="F:tachykinin receptor activity"/>
    <property type="evidence" value="ECO:0007669"/>
    <property type="project" value="Ensembl"/>
</dbReference>
<dbReference type="GO" id="GO:0045777">
    <property type="term" value="P:positive regulation of blood pressure"/>
    <property type="evidence" value="ECO:0007669"/>
    <property type="project" value="Ensembl"/>
</dbReference>
<dbReference type="GO" id="GO:1902093">
    <property type="term" value="P:positive regulation of flagellated sperm motility"/>
    <property type="evidence" value="ECO:0007669"/>
    <property type="project" value="Ensembl"/>
</dbReference>
<dbReference type="GO" id="GO:0010460">
    <property type="term" value="P:positive regulation of heart rate"/>
    <property type="evidence" value="ECO:0007669"/>
    <property type="project" value="Ensembl"/>
</dbReference>
<dbReference type="GO" id="GO:0070474">
    <property type="term" value="P:positive regulation of uterine smooth muscle contraction"/>
    <property type="evidence" value="ECO:0007669"/>
    <property type="project" value="Ensembl"/>
</dbReference>
<dbReference type="GO" id="GO:0042053">
    <property type="term" value="P:regulation of dopamine metabolic process"/>
    <property type="evidence" value="ECO:0007669"/>
    <property type="project" value="Ensembl"/>
</dbReference>
<dbReference type="GO" id="GO:0060259">
    <property type="term" value="P:regulation of feeding behavior"/>
    <property type="evidence" value="ECO:0007669"/>
    <property type="project" value="Ensembl"/>
</dbReference>
<dbReference type="GO" id="GO:0042220">
    <property type="term" value="P:response to cocaine"/>
    <property type="evidence" value="ECO:0007669"/>
    <property type="project" value="Ensembl"/>
</dbReference>
<dbReference type="GO" id="GO:0032355">
    <property type="term" value="P:response to estradiol"/>
    <property type="evidence" value="ECO:0007669"/>
    <property type="project" value="Ensembl"/>
</dbReference>
<dbReference type="CDD" id="cd16003">
    <property type="entry name" value="7tmA_NKR_NK3R"/>
    <property type="match status" value="1"/>
</dbReference>
<dbReference type="FunFam" id="1.20.1070.10:FF:000078">
    <property type="entry name" value="Neuromedin-K receptor"/>
    <property type="match status" value="1"/>
</dbReference>
<dbReference type="Gene3D" id="1.20.1070.10">
    <property type="entry name" value="Rhodopsin 7-helix transmembrane proteins"/>
    <property type="match status" value="1"/>
</dbReference>
<dbReference type="InterPro" id="IPR000276">
    <property type="entry name" value="GPCR_Rhodpsn"/>
</dbReference>
<dbReference type="InterPro" id="IPR017452">
    <property type="entry name" value="GPCR_Rhodpsn_7TM"/>
</dbReference>
<dbReference type="InterPro" id="IPR001681">
    <property type="entry name" value="Neurokn_rcpt"/>
</dbReference>
<dbReference type="InterPro" id="IPR001013">
    <property type="entry name" value="NK3_rcpt"/>
</dbReference>
<dbReference type="PANTHER" id="PTHR46925">
    <property type="entry name" value="G-PROTEIN COUPLED RECEPTOR TKR-1-RELATED"/>
    <property type="match status" value="1"/>
</dbReference>
<dbReference type="PANTHER" id="PTHR46925:SF1">
    <property type="entry name" value="NEUROMEDIN-K RECEPTOR"/>
    <property type="match status" value="1"/>
</dbReference>
<dbReference type="Pfam" id="PF00001">
    <property type="entry name" value="7tm_1"/>
    <property type="match status" value="1"/>
</dbReference>
<dbReference type="PRINTS" id="PR00237">
    <property type="entry name" value="GPCRRHODOPSN"/>
</dbReference>
<dbReference type="PRINTS" id="PR01026">
    <property type="entry name" value="NEUROKININ3R"/>
</dbReference>
<dbReference type="PRINTS" id="PR00244">
    <property type="entry name" value="NEUROKININR"/>
</dbReference>
<dbReference type="SMART" id="SM01381">
    <property type="entry name" value="7TM_GPCR_Srsx"/>
    <property type="match status" value="1"/>
</dbReference>
<dbReference type="SUPFAM" id="SSF81321">
    <property type="entry name" value="Family A G protein-coupled receptor-like"/>
    <property type="match status" value="1"/>
</dbReference>
<dbReference type="PROSITE" id="PS00237">
    <property type="entry name" value="G_PROTEIN_RECEP_F1_1"/>
    <property type="match status" value="1"/>
</dbReference>
<dbReference type="PROSITE" id="PS50262">
    <property type="entry name" value="G_PROTEIN_RECEP_F1_2"/>
    <property type="match status" value="1"/>
</dbReference>
<proteinExistence type="evidence at transcript level"/>
<gene>
    <name type="primary">Tacr3</name>
    <name type="synonym">Tac3r</name>
</gene>
<keyword id="KW-1003">Cell membrane</keyword>
<keyword id="KW-1015">Disulfide bond</keyword>
<keyword id="KW-0297">G-protein coupled receptor</keyword>
<keyword id="KW-0325">Glycoprotein</keyword>
<keyword id="KW-0449">Lipoprotein</keyword>
<keyword id="KW-0472">Membrane</keyword>
<keyword id="KW-0564">Palmitate</keyword>
<keyword id="KW-0675">Receptor</keyword>
<keyword id="KW-1185">Reference proteome</keyword>
<keyword id="KW-0807">Transducer</keyword>
<keyword id="KW-0812">Transmembrane</keyword>
<keyword id="KW-1133">Transmembrane helix</keyword>
<reference key="1">
    <citation type="submission" date="2000-02" db="EMBL/GenBank/DDBJ databases">
        <title>Molecular cloning and characterization of the murine neurokinin-3 receptor.</title>
        <authorList>
            <person name="Feild J.A."/>
            <person name="Brun K.A."/>
        </authorList>
    </citation>
    <scope>NUCLEOTIDE SEQUENCE [MRNA]</scope>
    <source>
        <tissue>Brain</tissue>
    </source>
</reference>
<reference key="2">
    <citation type="journal article" date="2005" name="Science">
        <title>The transcriptional landscape of the mammalian genome.</title>
        <authorList>
            <person name="Carninci P."/>
            <person name="Kasukawa T."/>
            <person name="Katayama S."/>
            <person name="Gough J."/>
            <person name="Frith M.C."/>
            <person name="Maeda N."/>
            <person name="Oyama R."/>
            <person name="Ravasi T."/>
            <person name="Lenhard B."/>
            <person name="Wells C."/>
            <person name="Kodzius R."/>
            <person name="Shimokawa K."/>
            <person name="Bajic V.B."/>
            <person name="Brenner S.E."/>
            <person name="Batalov S."/>
            <person name="Forrest A.R."/>
            <person name="Zavolan M."/>
            <person name="Davis M.J."/>
            <person name="Wilming L.G."/>
            <person name="Aidinis V."/>
            <person name="Allen J.E."/>
            <person name="Ambesi-Impiombato A."/>
            <person name="Apweiler R."/>
            <person name="Aturaliya R.N."/>
            <person name="Bailey T.L."/>
            <person name="Bansal M."/>
            <person name="Baxter L."/>
            <person name="Beisel K.W."/>
            <person name="Bersano T."/>
            <person name="Bono H."/>
            <person name="Chalk A.M."/>
            <person name="Chiu K.P."/>
            <person name="Choudhary V."/>
            <person name="Christoffels A."/>
            <person name="Clutterbuck D.R."/>
            <person name="Crowe M.L."/>
            <person name="Dalla E."/>
            <person name="Dalrymple B.P."/>
            <person name="de Bono B."/>
            <person name="Della Gatta G."/>
            <person name="di Bernardo D."/>
            <person name="Down T."/>
            <person name="Engstrom P."/>
            <person name="Fagiolini M."/>
            <person name="Faulkner G."/>
            <person name="Fletcher C.F."/>
            <person name="Fukushima T."/>
            <person name="Furuno M."/>
            <person name="Futaki S."/>
            <person name="Gariboldi M."/>
            <person name="Georgii-Hemming P."/>
            <person name="Gingeras T.R."/>
            <person name="Gojobori T."/>
            <person name="Green R.E."/>
            <person name="Gustincich S."/>
            <person name="Harbers M."/>
            <person name="Hayashi Y."/>
            <person name="Hensch T.K."/>
            <person name="Hirokawa N."/>
            <person name="Hill D."/>
            <person name="Huminiecki L."/>
            <person name="Iacono M."/>
            <person name="Ikeo K."/>
            <person name="Iwama A."/>
            <person name="Ishikawa T."/>
            <person name="Jakt M."/>
            <person name="Kanapin A."/>
            <person name="Katoh M."/>
            <person name="Kawasawa Y."/>
            <person name="Kelso J."/>
            <person name="Kitamura H."/>
            <person name="Kitano H."/>
            <person name="Kollias G."/>
            <person name="Krishnan S.P."/>
            <person name="Kruger A."/>
            <person name="Kummerfeld S.K."/>
            <person name="Kurochkin I.V."/>
            <person name="Lareau L.F."/>
            <person name="Lazarevic D."/>
            <person name="Lipovich L."/>
            <person name="Liu J."/>
            <person name="Liuni S."/>
            <person name="McWilliam S."/>
            <person name="Madan Babu M."/>
            <person name="Madera M."/>
            <person name="Marchionni L."/>
            <person name="Matsuda H."/>
            <person name="Matsuzawa S."/>
            <person name="Miki H."/>
            <person name="Mignone F."/>
            <person name="Miyake S."/>
            <person name="Morris K."/>
            <person name="Mottagui-Tabar S."/>
            <person name="Mulder N."/>
            <person name="Nakano N."/>
            <person name="Nakauchi H."/>
            <person name="Ng P."/>
            <person name="Nilsson R."/>
            <person name="Nishiguchi S."/>
            <person name="Nishikawa S."/>
            <person name="Nori F."/>
            <person name="Ohara O."/>
            <person name="Okazaki Y."/>
            <person name="Orlando V."/>
            <person name="Pang K.C."/>
            <person name="Pavan W.J."/>
            <person name="Pavesi G."/>
            <person name="Pesole G."/>
            <person name="Petrovsky N."/>
            <person name="Piazza S."/>
            <person name="Reed J."/>
            <person name="Reid J.F."/>
            <person name="Ring B.Z."/>
            <person name="Ringwald M."/>
            <person name="Rost B."/>
            <person name="Ruan Y."/>
            <person name="Salzberg S.L."/>
            <person name="Sandelin A."/>
            <person name="Schneider C."/>
            <person name="Schoenbach C."/>
            <person name="Sekiguchi K."/>
            <person name="Semple C.A."/>
            <person name="Seno S."/>
            <person name="Sessa L."/>
            <person name="Sheng Y."/>
            <person name="Shibata Y."/>
            <person name="Shimada H."/>
            <person name="Shimada K."/>
            <person name="Silva D."/>
            <person name="Sinclair B."/>
            <person name="Sperling S."/>
            <person name="Stupka E."/>
            <person name="Sugiura K."/>
            <person name="Sultana R."/>
            <person name="Takenaka Y."/>
            <person name="Taki K."/>
            <person name="Tammoja K."/>
            <person name="Tan S.L."/>
            <person name="Tang S."/>
            <person name="Taylor M.S."/>
            <person name="Tegner J."/>
            <person name="Teichmann S.A."/>
            <person name="Ueda H.R."/>
            <person name="van Nimwegen E."/>
            <person name="Verardo R."/>
            <person name="Wei C.L."/>
            <person name="Yagi K."/>
            <person name="Yamanishi H."/>
            <person name="Zabarovsky E."/>
            <person name="Zhu S."/>
            <person name="Zimmer A."/>
            <person name="Hide W."/>
            <person name="Bult C."/>
            <person name="Grimmond S.M."/>
            <person name="Teasdale R.D."/>
            <person name="Liu E.T."/>
            <person name="Brusic V."/>
            <person name="Quackenbush J."/>
            <person name="Wahlestedt C."/>
            <person name="Mattick J.S."/>
            <person name="Hume D.A."/>
            <person name="Kai C."/>
            <person name="Sasaki D."/>
            <person name="Tomaru Y."/>
            <person name="Fukuda S."/>
            <person name="Kanamori-Katayama M."/>
            <person name="Suzuki M."/>
            <person name="Aoki J."/>
            <person name="Arakawa T."/>
            <person name="Iida J."/>
            <person name="Imamura K."/>
            <person name="Itoh M."/>
            <person name="Kato T."/>
            <person name="Kawaji H."/>
            <person name="Kawagashira N."/>
            <person name="Kawashima T."/>
            <person name="Kojima M."/>
            <person name="Kondo S."/>
            <person name="Konno H."/>
            <person name="Nakano K."/>
            <person name="Ninomiya N."/>
            <person name="Nishio T."/>
            <person name="Okada M."/>
            <person name="Plessy C."/>
            <person name="Shibata K."/>
            <person name="Shiraki T."/>
            <person name="Suzuki S."/>
            <person name="Tagami M."/>
            <person name="Waki K."/>
            <person name="Watahiki A."/>
            <person name="Okamura-Oho Y."/>
            <person name="Suzuki H."/>
            <person name="Kawai J."/>
            <person name="Hayashizaki Y."/>
        </authorList>
    </citation>
    <scope>NUCLEOTIDE SEQUENCE [LARGE SCALE MRNA]</scope>
    <source>
        <strain>C57BL/6J</strain>
        <tissue>Brain</tissue>
        <tissue>Medulla oblongata</tissue>
    </source>
</reference>
<reference key="3">
    <citation type="submission" date="1995-06" db="EMBL/GenBank/DDBJ databases">
        <authorList>
            <person name="Maroteaux L."/>
        </authorList>
    </citation>
    <scope>NUCLEOTIDE SEQUENCE [MRNA] OF 1-385</scope>
    <source>
        <tissue>Brain</tissue>
    </source>
</reference>
<reference key="4">
    <citation type="journal article" date="1994" name="J. Immunol.">
        <title>Molecular evidence that granuloma T lymphocytes in murine schistosomiasis mansoni express an authentic substance P (NK-1) receptor.</title>
        <authorList>
            <person name="Cook G.A."/>
            <person name="Elliott D."/>
            <person name="Metwali A."/>
            <person name="Blum A.M."/>
            <person name="Sandor M."/>
            <person name="Lynch R."/>
            <person name="Weinstock J.V."/>
        </authorList>
    </citation>
    <scope>NUCLEOTIDE SEQUENCE [MRNA] OF 103-328</scope>
    <source>
        <strain>CBA/J</strain>
        <tissue>Brain</tissue>
    </source>
</reference>
<comment type="function">
    <text>This is a receptor for the tachykinin neuropeptide neuromedin-K (neurokinin B). It is associated with G proteins that activate a phosphatidylinositol-calcium second messenger system.</text>
</comment>
<comment type="subcellular location">
    <subcellularLocation>
        <location>Cell membrane</location>
        <topology>Multi-pass membrane protein</topology>
    </subcellularLocation>
</comment>
<comment type="PTM">
    <text>The anchoring of this receptor to the plasma membrane is probably mediated by the palmitoylation of a cysteine residue.</text>
</comment>
<comment type="similarity">
    <text evidence="2">Belongs to the G-protein coupled receptor 1 family.</text>
</comment>
<name>NK3R_MOUSE</name>
<protein>
    <recommendedName>
        <fullName>Neuromedin-K receptor</fullName>
        <shortName>NKR</shortName>
    </recommendedName>
    <alternativeName>
        <fullName>NK-3 receptor</fullName>
        <shortName>NK-3R</shortName>
    </alternativeName>
    <alternativeName>
        <fullName>Neurokinin B receptor</fullName>
    </alternativeName>
    <alternativeName>
        <fullName>Tachykinin receptor 3</fullName>
    </alternativeName>
</protein>
<feature type="chain" id="PRO_0000069900" description="Neuromedin-K receptor">
    <location>
        <begin position="1"/>
        <end position="452"/>
    </location>
</feature>
<feature type="topological domain" description="Extracellular" evidence="1">
    <location>
        <begin position="1"/>
        <end position="71"/>
    </location>
</feature>
<feature type="transmembrane region" description="Helical; Name=1" evidence="1">
    <location>
        <begin position="72"/>
        <end position="94"/>
    </location>
</feature>
<feature type="topological domain" description="Cytoplasmic" evidence="1">
    <location>
        <begin position="95"/>
        <end position="104"/>
    </location>
</feature>
<feature type="transmembrane region" description="Helical; Name=2" evidence="1">
    <location>
        <begin position="105"/>
        <end position="126"/>
    </location>
</feature>
<feature type="topological domain" description="Extracellular" evidence="1">
    <location>
        <begin position="127"/>
        <end position="146"/>
    </location>
</feature>
<feature type="transmembrane region" description="Helical; Name=3" evidence="1">
    <location>
        <begin position="147"/>
        <end position="168"/>
    </location>
</feature>
<feature type="topological domain" description="Cytoplasmic" evidence="1">
    <location>
        <begin position="169"/>
        <end position="188"/>
    </location>
</feature>
<feature type="transmembrane region" description="Helical; Name=4" evidence="1">
    <location>
        <begin position="189"/>
        <end position="209"/>
    </location>
</feature>
<feature type="topological domain" description="Extracellular" evidence="1">
    <location>
        <begin position="210"/>
        <end position="232"/>
    </location>
</feature>
<feature type="transmembrane region" description="Helical; Name=5" evidence="1">
    <location>
        <begin position="233"/>
        <end position="257"/>
    </location>
</feature>
<feature type="topological domain" description="Cytoplasmic" evidence="1">
    <location>
        <begin position="258"/>
        <end position="286"/>
    </location>
</feature>
<feature type="transmembrane region" description="Helical; Name=6" evidence="1">
    <location>
        <begin position="287"/>
        <end position="308"/>
    </location>
</feature>
<feature type="topological domain" description="Extracellular" evidence="1">
    <location>
        <begin position="309"/>
        <end position="321"/>
    </location>
</feature>
<feature type="transmembrane region" description="Helical; Name=7" evidence="1">
    <location>
        <begin position="322"/>
        <end position="346"/>
    </location>
</feature>
<feature type="topological domain" description="Cytoplasmic" evidence="1">
    <location>
        <begin position="347"/>
        <end position="452"/>
    </location>
</feature>
<feature type="region of interest" description="Disordered" evidence="3">
    <location>
        <begin position="401"/>
        <end position="452"/>
    </location>
</feature>
<feature type="compositionally biased region" description="Low complexity" evidence="3">
    <location>
        <begin position="433"/>
        <end position="452"/>
    </location>
</feature>
<feature type="lipid moiety-binding region" description="S-palmitoyl cysteine" evidence="1">
    <location>
        <position position="361"/>
    </location>
</feature>
<feature type="glycosylation site" description="N-linked (GlcNAc...) asparagine" evidence="1">
    <location>
        <position position="9"/>
    </location>
</feature>
<feature type="glycosylation site" description="N-linked (GlcNAc...) asparagine" evidence="1">
    <location>
        <position position="23"/>
    </location>
</feature>
<feature type="glycosylation site" description="N-linked (GlcNAc...) asparagine" evidence="1">
    <location>
        <position position="40"/>
    </location>
</feature>
<feature type="glycosylation site" description="N-linked (GlcNAc...) asparagine" evidence="1">
    <location>
        <position position="60"/>
    </location>
</feature>
<feature type="disulfide bond" evidence="2">
    <location>
        <begin position="145"/>
        <end position="220"/>
    </location>
</feature>
<feature type="sequence conflict" description="In Ref. 3; CAA61088." evidence="4" ref="3">
    <original>A</original>
    <variation>D</variation>
    <location>
        <position position="59"/>
    </location>
</feature>
<feature type="sequence conflict" description="In Ref. 4; AAA17893." evidence="4" ref="4">
    <original>A</original>
    <variation>S</variation>
    <location>
        <position position="198"/>
    </location>
</feature>
<feature type="sequence conflict" description="In Ref. 3; CAA61088." evidence="4" ref="3">
    <original>P</original>
    <variation>L</variation>
    <location>
        <position position="267"/>
    </location>
</feature>
<feature type="sequence conflict" description="In Ref. 3; CAA61088." evidence="4" ref="3">
    <original>S</original>
    <variation>P</variation>
    <location>
        <position position="385"/>
    </location>
</feature>
<accession>P47937</accession>
<accession>Q61968</accession>
<accession>Q8BL44</accession>
<accession>Q9JKN0</accession>
<sequence length="452" mass="51026">MASVPTGENWTDGTAGVGSHTGNLSAALGITEWLALQAGNFSSALGLPVTSQAPSQVRANLTNQFVQPSWRIALWSLAYGLVVAVAVFGNLIVIWIILAHKRMRTVTNYFLVNLAFSDASVAAFNTLVNFIYGVHSEWYFGANYCRFQNFFPITAVFASIYSMTAIAVDRYMAIIDPLKPRLSATATKIVIGSIWILAFLLAFPQCLYSKIKVMPGRTLCYVQWPEGPKQHFTYHIIVIILVYCFPLLIMGVTYTIVGITLWGGEIPGDTCDKYHEQLKAKRKVVKMMIIVVVTFAICWLPYHVYFILTAIYQQLNRWKYIQQVYLASFWLAMSSTMYNPIIYCCLNKRFRAGFKRAFRWCPFIQVSSYDELELKTTRFHPTRQSSLYTVSRMESVTVLYDPSEGDPAKSSRKKRAVPRDPSANGCSHREFKSASTTSSFISSPYTSVDEYS</sequence>
<organism>
    <name type="scientific">Mus musculus</name>
    <name type="common">Mouse</name>
    <dbReference type="NCBI Taxonomy" id="10090"/>
    <lineage>
        <taxon>Eukaryota</taxon>
        <taxon>Metazoa</taxon>
        <taxon>Chordata</taxon>
        <taxon>Craniata</taxon>
        <taxon>Vertebrata</taxon>
        <taxon>Euteleostomi</taxon>
        <taxon>Mammalia</taxon>
        <taxon>Eutheria</taxon>
        <taxon>Euarchontoglires</taxon>
        <taxon>Glires</taxon>
        <taxon>Rodentia</taxon>
        <taxon>Myomorpha</taxon>
        <taxon>Muroidea</taxon>
        <taxon>Muridae</taxon>
        <taxon>Murinae</taxon>
        <taxon>Mus</taxon>
        <taxon>Mus</taxon>
    </lineage>
</organism>